<sequence>MARKTLRARRFFSLIFPFFFITSVYAEQTPVSAKTVTVEAKNETFAPQHPDQYQSWKATSEQSAREDALAEDPRLVILWAGYPFSRDYNKPRGHAYAVTDVRETLRTGAPKTAEDGPLPMACWSCKSPDVARLIQQEGEDGYFHGKWARGGPEIVNDLGCADCHNTASDDFAQGKPAITLSRPYAERAMEAIGKPFDKAGRFDQQSMVCGQCHVEYYFDGKNKAVKFPWDEGMKVENMEQYYDAIAFSDWTNSLSKTPMLKAQHPEYETWSAGIHGKNNVTCIDCHMPKVQNAEGKLYTDHKIGNPFDNFAQTCANCHTQDKASLQKVVAERKQAIHDLKIKVEDQLVHAHFEAKAAWDAGATDAEMKPILNDIRHAQWRWDLAIASHGIHMHAPEEGLRMLGSAMDKAADARTKLARLLATKGITHEIPLPDISTKEKAQKAIGLNMQQINAEKQDFLKTVVPQWEDQARKNGLLSQ</sequence>
<dbReference type="EC" id="1.7.2.2" evidence="1"/>
<dbReference type="EMBL" id="AL513382">
    <property type="protein sequence ID" value="CAD09261.1"/>
    <property type="molecule type" value="Genomic_DNA"/>
</dbReference>
<dbReference type="EMBL" id="AE014613">
    <property type="protein sequence ID" value="AAO71647.1"/>
    <property type="molecule type" value="Genomic_DNA"/>
</dbReference>
<dbReference type="RefSeq" id="NP_458575.1">
    <property type="nucleotide sequence ID" value="NC_003198.1"/>
</dbReference>
<dbReference type="RefSeq" id="WP_000101783.1">
    <property type="nucleotide sequence ID" value="NZ_WSUR01000035.1"/>
</dbReference>
<dbReference type="SMR" id="Q8Z1Q9"/>
<dbReference type="STRING" id="220341.gene:17588305"/>
<dbReference type="KEGG" id="stt:t4183"/>
<dbReference type="KEGG" id="sty:STY4475"/>
<dbReference type="PATRIC" id="fig|220341.7.peg.4577"/>
<dbReference type="eggNOG" id="COG3303">
    <property type="taxonomic scope" value="Bacteria"/>
</dbReference>
<dbReference type="HOGENOM" id="CLU_035040_1_0_6"/>
<dbReference type="OMA" id="INRACQT"/>
<dbReference type="OrthoDB" id="9780421at2"/>
<dbReference type="UniPathway" id="UPA00653"/>
<dbReference type="Proteomes" id="UP000000541">
    <property type="component" value="Chromosome"/>
</dbReference>
<dbReference type="Proteomes" id="UP000002670">
    <property type="component" value="Chromosome"/>
</dbReference>
<dbReference type="GO" id="GO:0030288">
    <property type="term" value="C:outer membrane-bounded periplasmic space"/>
    <property type="evidence" value="ECO:0007669"/>
    <property type="project" value="TreeGrafter"/>
</dbReference>
<dbReference type="GO" id="GO:0005509">
    <property type="term" value="F:calcium ion binding"/>
    <property type="evidence" value="ECO:0007669"/>
    <property type="project" value="UniProtKB-UniRule"/>
</dbReference>
<dbReference type="GO" id="GO:0020037">
    <property type="term" value="F:heme binding"/>
    <property type="evidence" value="ECO:0007669"/>
    <property type="project" value="InterPro"/>
</dbReference>
<dbReference type="GO" id="GO:0005506">
    <property type="term" value="F:iron ion binding"/>
    <property type="evidence" value="ECO:0007669"/>
    <property type="project" value="UniProtKB-UniRule"/>
</dbReference>
<dbReference type="GO" id="GO:0042279">
    <property type="term" value="F:nitrite reductase (cytochrome, ammonia-forming) activity"/>
    <property type="evidence" value="ECO:0007669"/>
    <property type="project" value="UniProtKB-UniRule"/>
</dbReference>
<dbReference type="GO" id="GO:0019645">
    <property type="term" value="P:anaerobic electron transport chain"/>
    <property type="evidence" value="ECO:0007669"/>
    <property type="project" value="TreeGrafter"/>
</dbReference>
<dbReference type="GO" id="GO:0042128">
    <property type="term" value="P:nitrate assimilation"/>
    <property type="evidence" value="ECO:0007669"/>
    <property type="project" value="UniProtKB-UniRule"/>
</dbReference>
<dbReference type="CDD" id="cd00548">
    <property type="entry name" value="NrfA-like"/>
    <property type="match status" value="1"/>
</dbReference>
<dbReference type="FunFam" id="1.10.1130.10:FF:000002">
    <property type="entry name" value="Cytochrome c-552"/>
    <property type="match status" value="1"/>
</dbReference>
<dbReference type="FunFam" id="1.20.140.10:FF:000014">
    <property type="entry name" value="Cytochrome c-552"/>
    <property type="match status" value="1"/>
</dbReference>
<dbReference type="Gene3D" id="1.20.140.10">
    <property type="entry name" value="Butyryl-CoA Dehydrogenase, subunit A, domain 3"/>
    <property type="match status" value="1"/>
</dbReference>
<dbReference type="Gene3D" id="1.10.1130.10">
    <property type="entry name" value="Flavocytochrome C3, Chain A"/>
    <property type="match status" value="1"/>
</dbReference>
<dbReference type="HAMAP" id="MF_01182">
    <property type="entry name" value="Cytochrom_C552"/>
    <property type="match status" value="1"/>
</dbReference>
<dbReference type="InterPro" id="IPR003321">
    <property type="entry name" value="Cyt_c552"/>
</dbReference>
<dbReference type="InterPro" id="IPR017570">
    <property type="entry name" value="Cyt_c_NO2Rdtase_formate-dep"/>
</dbReference>
<dbReference type="InterPro" id="IPR036280">
    <property type="entry name" value="Multihaem_cyt_sf"/>
</dbReference>
<dbReference type="NCBIfam" id="TIGR03152">
    <property type="entry name" value="cyto_c552_HCOOH"/>
    <property type="match status" value="1"/>
</dbReference>
<dbReference type="NCBIfam" id="NF008339">
    <property type="entry name" value="PRK11125.1"/>
    <property type="match status" value="1"/>
</dbReference>
<dbReference type="PANTHER" id="PTHR30633:SF0">
    <property type="entry name" value="CYTOCHROME C-552"/>
    <property type="match status" value="1"/>
</dbReference>
<dbReference type="PANTHER" id="PTHR30633">
    <property type="entry name" value="CYTOCHROME C-552 RESPIRATORY NITRITE REDUCTASE"/>
    <property type="match status" value="1"/>
</dbReference>
<dbReference type="Pfam" id="PF02335">
    <property type="entry name" value="Cytochrom_C552"/>
    <property type="match status" value="1"/>
</dbReference>
<dbReference type="PIRSF" id="PIRSF000243">
    <property type="entry name" value="Cyt_c552"/>
    <property type="match status" value="1"/>
</dbReference>
<dbReference type="SUPFAM" id="SSF48695">
    <property type="entry name" value="Multiheme cytochromes"/>
    <property type="match status" value="1"/>
</dbReference>
<dbReference type="PROSITE" id="PS51008">
    <property type="entry name" value="MULTIHEME_CYTC"/>
    <property type="match status" value="1"/>
</dbReference>
<gene>
    <name evidence="1" type="primary">nrfA</name>
    <name type="ordered locus">STY4475</name>
    <name type="ordered locus">t4183</name>
</gene>
<organism>
    <name type="scientific">Salmonella typhi</name>
    <dbReference type="NCBI Taxonomy" id="90370"/>
    <lineage>
        <taxon>Bacteria</taxon>
        <taxon>Pseudomonadati</taxon>
        <taxon>Pseudomonadota</taxon>
        <taxon>Gammaproteobacteria</taxon>
        <taxon>Enterobacterales</taxon>
        <taxon>Enterobacteriaceae</taxon>
        <taxon>Salmonella</taxon>
    </lineage>
</organism>
<evidence type="ECO:0000255" key="1">
    <source>
        <dbReference type="HAMAP-Rule" id="MF_01182"/>
    </source>
</evidence>
<feature type="signal peptide" evidence="1">
    <location>
        <begin position="1"/>
        <end position="26"/>
    </location>
</feature>
<feature type="chain" id="PRO_0000006581" description="Cytochrome c-552">
    <location>
        <begin position="27"/>
        <end position="478"/>
    </location>
</feature>
<feature type="binding site" description="axial binding residue" evidence="1">
    <location>
        <position position="94"/>
    </location>
    <ligand>
        <name>heme c</name>
        <dbReference type="ChEBI" id="CHEBI:61717"/>
        <label>3</label>
    </ligand>
    <ligandPart>
        <name>Fe</name>
        <dbReference type="ChEBI" id="CHEBI:18248"/>
    </ligandPart>
</feature>
<feature type="binding site" description="covalent" evidence="1">
    <location>
        <position position="122"/>
    </location>
    <ligand>
        <name>heme</name>
        <dbReference type="ChEBI" id="CHEBI:30413"/>
        <label>1</label>
    </ligand>
</feature>
<feature type="binding site" description="covalent" evidence="1">
    <location>
        <position position="125"/>
    </location>
    <ligand>
        <name>heme</name>
        <dbReference type="ChEBI" id="CHEBI:30413"/>
        <label>1</label>
    </ligand>
</feature>
<feature type="binding site" description="axial binding residue" evidence="1">
    <location>
        <position position="126"/>
    </location>
    <ligand>
        <name>heme</name>
        <dbReference type="ChEBI" id="CHEBI:30413"/>
        <label>1</label>
    </ligand>
    <ligandPart>
        <name>Fe</name>
        <dbReference type="ChEBI" id="CHEBI:18248"/>
    </ligandPart>
</feature>
<feature type="binding site" description="covalent" evidence="1">
    <location>
        <position position="160"/>
    </location>
    <ligand>
        <name>heme c</name>
        <dbReference type="ChEBI" id="CHEBI:61717"/>
        <label>2</label>
    </ligand>
</feature>
<feature type="binding site" description="covalent" evidence="1">
    <location>
        <position position="163"/>
    </location>
    <ligand>
        <name>heme c</name>
        <dbReference type="ChEBI" id="CHEBI:61717"/>
        <label>2</label>
    </ligand>
</feature>
<feature type="binding site" description="axial binding residue" evidence="1">
    <location>
        <position position="164"/>
    </location>
    <ligand>
        <name>heme c</name>
        <dbReference type="ChEBI" id="CHEBI:61717"/>
        <label>2</label>
    </ligand>
    <ligandPart>
        <name>Fe</name>
        <dbReference type="ChEBI" id="CHEBI:18248"/>
    </ligandPart>
</feature>
<feature type="binding site" description="covalent" evidence="1">
    <location>
        <position position="209"/>
    </location>
    <ligand>
        <name>heme c</name>
        <dbReference type="ChEBI" id="CHEBI:61717"/>
        <label>3</label>
    </ligand>
</feature>
<feature type="binding site" description="covalent" evidence="1">
    <location>
        <position position="212"/>
    </location>
    <ligand>
        <name>heme c</name>
        <dbReference type="ChEBI" id="CHEBI:61717"/>
        <label>3</label>
    </ligand>
</feature>
<feature type="binding site" description="axial binding residue" evidence="1">
    <location>
        <position position="213"/>
    </location>
    <ligand>
        <name>heme c</name>
        <dbReference type="ChEBI" id="CHEBI:61717"/>
        <label>3</label>
    </ligand>
    <ligandPart>
        <name>Fe</name>
        <dbReference type="ChEBI" id="CHEBI:18248"/>
    </ligandPart>
</feature>
<feature type="binding site" evidence="1">
    <location>
        <position position="215"/>
    </location>
    <ligand>
        <name>Ca(2+)</name>
        <dbReference type="ChEBI" id="CHEBI:29108"/>
    </ligand>
</feature>
<feature type="binding site" evidence="1">
    <location>
        <position position="216"/>
    </location>
    <ligand>
        <name>Ca(2+)</name>
        <dbReference type="ChEBI" id="CHEBI:29108"/>
    </ligand>
</feature>
<feature type="binding site" evidence="1">
    <location>
        <position position="216"/>
    </location>
    <ligand>
        <name>substrate</name>
    </ligand>
</feature>
<feature type="binding site" evidence="1">
    <location>
        <position position="261"/>
    </location>
    <ligand>
        <name>Ca(2+)</name>
        <dbReference type="ChEBI" id="CHEBI:29108"/>
    </ligand>
</feature>
<feature type="binding site" evidence="1">
    <location>
        <position position="263"/>
    </location>
    <ligand>
        <name>Ca(2+)</name>
        <dbReference type="ChEBI" id="CHEBI:29108"/>
    </ligand>
</feature>
<feature type="binding site" evidence="1">
    <location>
        <position position="264"/>
    </location>
    <ligand>
        <name>substrate</name>
    </ligand>
</feature>
<feature type="binding site" description="axial binding residue" evidence="1">
    <location>
        <position position="275"/>
    </location>
    <ligand>
        <name>heme c</name>
        <dbReference type="ChEBI" id="CHEBI:61717"/>
        <label>5</label>
    </ligand>
    <ligandPart>
        <name>Fe</name>
        <dbReference type="ChEBI" id="CHEBI:18248"/>
    </ligandPart>
</feature>
<feature type="binding site" description="covalent" evidence="1">
    <location>
        <position position="282"/>
    </location>
    <ligand>
        <name>heme c</name>
        <dbReference type="ChEBI" id="CHEBI:61717"/>
        <label>4</label>
    </ligand>
</feature>
<feature type="binding site" description="covalent" evidence="1">
    <location>
        <position position="285"/>
    </location>
    <ligand>
        <name>heme c</name>
        <dbReference type="ChEBI" id="CHEBI:61717"/>
        <label>4</label>
    </ligand>
</feature>
<feature type="binding site" description="axial binding residue" evidence="1">
    <location>
        <position position="286"/>
    </location>
    <ligand>
        <name>heme c</name>
        <dbReference type="ChEBI" id="CHEBI:61717"/>
        <label>4</label>
    </ligand>
    <ligandPart>
        <name>Fe</name>
        <dbReference type="ChEBI" id="CHEBI:18248"/>
    </ligandPart>
</feature>
<feature type="binding site" description="axial binding residue" evidence="1">
    <location>
        <position position="301"/>
    </location>
    <ligand>
        <name>heme c</name>
        <dbReference type="ChEBI" id="CHEBI:61717"/>
        <label>2</label>
    </ligand>
    <ligandPart>
        <name>Fe</name>
        <dbReference type="ChEBI" id="CHEBI:18248"/>
    </ligandPart>
</feature>
<feature type="binding site" description="covalent" evidence="1">
    <location>
        <position position="314"/>
    </location>
    <ligand>
        <name>heme c</name>
        <dbReference type="ChEBI" id="CHEBI:61717"/>
        <label>5</label>
    </ligand>
</feature>
<feature type="binding site" description="covalent" evidence="1">
    <location>
        <position position="317"/>
    </location>
    <ligand>
        <name>heme c</name>
        <dbReference type="ChEBI" id="CHEBI:61717"/>
        <label>5</label>
    </ligand>
</feature>
<feature type="binding site" description="axial binding residue" evidence="1">
    <location>
        <position position="318"/>
    </location>
    <ligand>
        <name>heme c</name>
        <dbReference type="ChEBI" id="CHEBI:61717"/>
        <label>5</label>
    </ligand>
    <ligandPart>
        <name>Fe</name>
        <dbReference type="ChEBI" id="CHEBI:18248"/>
    </ligandPart>
</feature>
<feature type="binding site" description="axial binding residue" evidence="1">
    <location>
        <position position="393"/>
    </location>
    <ligand>
        <name>heme c</name>
        <dbReference type="ChEBI" id="CHEBI:61717"/>
        <label>4</label>
    </ligand>
    <ligandPart>
        <name>Fe</name>
        <dbReference type="ChEBI" id="CHEBI:18248"/>
    </ligandPart>
</feature>
<comment type="function">
    <text evidence="1">Catalyzes the reduction of nitrite to ammonia, consuming six electrons in the process.</text>
</comment>
<comment type="catalytic activity">
    <reaction evidence="1">
        <text>6 Fe(III)-[cytochrome c] + NH4(+) + 2 H2O = 6 Fe(II)-[cytochrome c] + nitrite + 8 H(+)</text>
        <dbReference type="Rhea" id="RHEA:13089"/>
        <dbReference type="Rhea" id="RHEA-COMP:10350"/>
        <dbReference type="Rhea" id="RHEA-COMP:14399"/>
        <dbReference type="ChEBI" id="CHEBI:15377"/>
        <dbReference type="ChEBI" id="CHEBI:15378"/>
        <dbReference type="ChEBI" id="CHEBI:16301"/>
        <dbReference type="ChEBI" id="CHEBI:28938"/>
        <dbReference type="ChEBI" id="CHEBI:29033"/>
        <dbReference type="ChEBI" id="CHEBI:29034"/>
        <dbReference type="EC" id="1.7.2.2"/>
    </reaction>
</comment>
<comment type="cofactor">
    <cofactor evidence="1">
        <name>Ca(2+)</name>
        <dbReference type="ChEBI" id="CHEBI:29108"/>
    </cofactor>
    <text evidence="1">Binds 1 Ca(2+) ion per monomer.</text>
</comment>
<comment type="cofactor">
    <cofactor evidence="1">
        <name>heme c</name>
        <dbReference type="ChEBI" id="CHEBI:61717"/>
    </cofactor>
    <text evidence="1">Binds 5 heme c groups covalently per monomer.</text>
</comment>
<comment type="pathway">
    <text evidence="1">Nitrogen metabolism; nitrate reduction (assimilation).</text>
</comment>
<comment type="subcellular location">
    <subcellularLocation>
        <location evidence="1">Periplasm</location>
    </subcellularLocation>
</comment>
<comment type="similarity">
    <text evidence="1">Belongs to the cytochrome c-552 family.</text>
</comment>
<protein>
    <recommendedName>
        <fullName evidence="1">Cytochrome c-552</fullName>
        <ecNumber evidence="1">1.7.2.2</ecNumber>
    </recommendedName>
    <alternativeName>
        <fullName evidence="1">Ammonia-forming cytochrome c nitrite reductase</fullName>
        <shortName evidence="1">Cytochrome c nitrite reductase</shortName>
    </alternativeName>
</protein>
<proteinExistence type="inferred from homology"/>
<keyword id="KW-0106">Calcium</keyword>
<keyword id="KW-0249">Electron transport</keyword>
<keyword id="KW-0349">Heme</keyword>
<keyword id="KW-0408">Iron</keyword>
<keyword id="KW-0479">Metal-binding</keyword>
<keyword id="KW-0560">Oxidoreductase</keyword>
<keyword id="KW-0574">Periplasm</keyword>
<keyword id="KW-0732">Signal</keyword>
<keyword id="KW-0813">Transport</keyword>
<name>NRFA_SALTI</name>
<reference key="1">
    <citation type="journal article" date="2001" name="Nature">
        <title>Complete genome sequence of a multiple drug resistant Salmonella enterica serovar Typhi CT18.</title>
        <authorList>
            <person name="Parkhill J."/>
            <person name="Dougan G."/>
            <person name="James K.D."/>
            <person name="Thomson N.R."/>
            <person name="Pickard D."/>
            <person name="Wain J."/>
            <person name="Churcher C.M."/>
            <person name="Mungall K.L."/>
            <person name="Bentley S.D."/>
            <person name="Holden M.T.G."/>
            <person name="Sebaihia M."/>
            <person name="Baker S."/>
            <person name="Basham D."/>
            <person name="Brooks K."/>
            <person name="Chillingworth T."/>
            <person name="Connerton P."/>
            <person name="Cronin A."/>
            <person name="Davis P."/>
            <person name="Davies R.M."/>
            <person name="Dowd L."/>
            <person name="White N."/>
            <person name="Farrar J."/>
            <person name="Feltwell T."/>
            <person name="Hamlin N."/>
            <person name="Haque A."/>
            <person name="Hien T.T."/>
            <person name="Holroyd S."/>
            <person name="Jagels K."/>
            <person name="Krogh A."/>
            <person name="Larsen T.S."/>
            <person name="Leather S."/>
            <person name="Moule S."/>
            <person name="O'Gaora P."/>
            <person name="Parry C."/>
            <person name="Quail M.A."/>
            <person name="Rutherford K.M."/>
            <person name="Simmonds M."/>
            <person name="Skelton J."/>
            <person name="Stevens K."/>
            <person name="Whitehead S."/>
            <person name="Barrell B.G."/>
        </authorList>
    </citation>
    <scope>NUCLEOTIDE SEQUENCE [LARGE SCALE GENOMIC DNA]</scope>
    <source>
        <strain>CT18</strain>
    </source>
</reference>
<reference key="2">
    <citation type="journal article" date="2003" name="J. Bacteriol.">
        <title>Comparative genomics of Salmonella enterica serovar Typhi strains Ty2 and CT18.</title>
        <authorList>
            <person name="Deng W."/>
            <person name="Liou S.-R."/>
            <person name="Plunkett G. III"/>
            <person name="Mayhew G.F."/>
            <person name="Rose D.J."/>
            <person name="Burland V."/>
            <person name="Kodoyianni V."/>
            <person name="Schwartz D.C."/>
            <person name="Blattner F.R."/>
        </authorList>
    </citation>
    <scope>NUCLEOTIDE SEQUENCE [LARGE SCALE GENOMIC DNA]</scope>
    <source>
        <strain>ATCC 700931 / Ty2</strain>
    </source>
</reference>
<accession>Q8Z1Q9</accession>